<gene>
    <name type="primary">GAD</name>
</gene>
<dbReference type="EC" id="4.1.1.15"/>
<dbReference type="EMBL" id="L16797">
    <property type="protein sequence ID" value="AAA33709.1"/>
    <property type="molecule type" value="mRNA"/>
</dbReference>
<dbReference type="EMBL" id="L16977">
    <property type="protein sequence ID" value="AAA33710.1"/>
    <property type="molecule type" value="mRNA"/>
</dbReference>
<dbReference type="PIR" id="A48767">
    <property type="entry name" value="A48767"/>
</dbReference>
<dbReference type="PDB" id="1NWD">
    <property type="method" value="NMR"/>
    <property type="chains" value="B/C=470-495"/>
</dbReference>
<dbReference type="PDBsum" id="1NWD"/>
<dbReference type="BMRB" id="Q07346"/>
<dbReference type="SASBDB" id="Q07346"/>
<dbReference type="SMR" id="Q07346"/>
<dbReference type="GO" id="GO:0005829">
    <property type="term" value="C:cytosol"/>
    <property type="evidence" value="ECO:0007669"/>
    <property type="project" value="TreeGrafter"/>
</dbReference>
<dbReference type="GO" id="GO:0005516">
    <property type="term" value="F:calmodulin binding"/>
    <property type="evidence" value="ECO:0007669"/>
    <property type="project" value="UniProtKB-KW"/>
</dbReference>
<dbReference type="GO" id="GO:0004351">
    <property type="term" value="F:glutamate decarboxylase activity"/>
    <property type="evidence" value="ECO:0007669"/>
    <property type="project" value="UniProtKB-EC"/>
</dbReference>
<dbReference type="GO" id="GO:0030170">
    <property type="term" value="F:pyridoxal phosphate binding"/>
    <property type="evidence" value="ECO:0007669"/>
    <property type="project" value="InterPro"/>
</dbReference>
<dbReference type="GO" id="GO:0006538">
    <property type="term" value="P:glutamate catabolic process"/>
    <property type="evidence" value="ECO:0007669"/>
    <property type="project" value="TreeGrafter"/>
</dbReference>
<dbReference type="CDD" id="cd06450">
    <property type="entry name" value="DOPA_deC_like"/>
    <property type="match status" value="1"/>
</dbReference>
<dbReference type="FunFam" id="3.40.640.10:FF:000022">
    <property type="entry name" value="Glutamate decarboxylase"/>
    <property type="match status" value="1"/>
</dbReference>
<dbReference type="FunFam" id="3.90.1150.160:FF:000001">
    <property type="entry name" value="Glutamate decarboxylase"/>
    <property type="match status" value="1"/>
</dbReference>
<dbReference type="FunFam" id="4.10.280.50:FF:000002">
    <property type="entry name" value="Glutamate decarboxylase"/>
    <property type="match status" value="1"/>
</dbReference>
<dbReference type="Gene3D" id="3.90.1150.160">
    <property type="match status" value="1"/>
</dbReference>
<dbReference type="Gene3D" id="4.10.280.50">
    <property type="match status" value="1"/>
</dbReference>
<dbReference type="Gene3D" id="3.40.640.10">
    <property type="entry name" value="Type I PLP-dependent aspartate aminotransferase-like (Major domain)"/>
    <property type="match status" value="1"/>
</dbReference>
<dbReference type="IDEAL" id="IID50189"/>
<dbReference type="InterPro" id="IPR010107">
    <property type="entry name" value="Glutamate_decarboxylase"/>
</dbReference>
<dbReference type="InterPro" id="IPR002129">
    <property type="entry name" value="PyrdxlP-dep_de-COase"/>
</dbReference>
<dbReference type="InterPro" id="IPR015424">
    <property type="entry name" value="PyrdxlP-dep_Trfase"/>
</dbReference>
<dbReference type="InterPro" id="IPR015421">
    <property type="entry name" value="PyrdxlP-dep_Trfase_major"/>
</dbReference>
<dbReference type="NCBIfam" id="TIGR01788">
    <property type="entry name" value="Glu-decarb-GAD"/>
    <property type="match status" value="1"/>
</dbReference>
<dbReference type="PANTHER" id="PTHR43321">
    <property type="entry name" value="GLUTAMATE DECARBOXYLASE"/>
    <property type="match status" value="1"/>
</dbReference>
<dbReference type="PANTHER" id="PTHR43321:SF36">
    <property type="entry name" value="GLUTAMATE DECARBOXYLASE"/>
    <property type="match status" value="1"/>
</dbReference>
<dbReference type="Pfam" id="PF00282">
    <property type="entry name" value="Pyridoxal_deC"/>
    <property type="match status" value="1"/>
</dbReference>
<dbReference type="SUPFAM" id="SSF53383">
    <property type="entry name" value="PLP-dependent transferases"/>
    <property type="match status" value="1"/>
</dbReference>
<keyword id="KW-0002">3D-structure</keyword>
<keyword id="KW-0112">Calmodulin-binding</keyword>
<keyword id="KW-0210">Decarboxylase</keyword>
<keyword id="KW-0456">Lyase</keyword>
<keyword id="KW-0663">Pyridoxal phosphate</keyword>
<name>DCE_PETHY</name>
<proteinExistence type="evidence at protein level"/>
<organism>
    <name type="scientific">Petunia hybrida</name>
    <name type="common">Petunia</name>
    <dbReference type="NCBI Taxonomy" id="4102"/>
    <lineage>
        <taxon>Eukaryota</taxon>
        <taxon>Viridiplantae</taxon>
        <taxon>Streptophyta</taxon>
        <taxon>Embryophyta</taxon>
        <taxon>Tracheophyta</taxon>
        <taxon>Spermatophyta</taxon>
        <taxon>Magnoliopsida</taxon>
        <taxon>eudicotyledons</taxon>
        <taxon>Gunneridae</taxon>
        <taxon>Pentapetalae</taxon>
        <taxon>asterids</taxon>
        <taxon>lamiids</taxon>
        <taxon>Solanales</taxon>
        <taxon>Solanaceae</taxon>
        <taxon>Petunioideae</taxon>
        <taxon>Petunia</taxon>
    </lineage>
</organism>
<evidence type="ECO:0000250" key="1"/>
<evidence type="ECO:0000269" key="2">
    <source>
    </source>
</evidence>
<evidence type="ECO:0000305" key="3"/>
<evidence type="ECO:0007829" key="4">
    <source>
        <dbReference type="PDB" id="1NWD"/>
    </source>
</evidence>
<reference key="1">
    <citation type="journal article" date="1993" name="J. Biol. Chem.">
        <title>A plant glutamate decarboxylase containing a calmodulin binding domain. Cloning, sequence, and functional analysis.</title>
        <authorList>
            <person name="Baum G."/>
            <person name="Chen Y."/>
            <person name="Arazi T."/>
            <person name="Takatsuji H."/>
            <person name="Fromm H."/>
        </authorList>
    </citation>
    <scope>NUCLEOTIDE SEQUENCE [MRNA]</scope>
    <source>
        <tissue>Petal</tissue>
    </source>
</reference>
<reference key="2">
    <citation type="journal article" date="2003" name="J. Mol. Biol.">
        <title>Structural basis for simultaneous binding of two carboxy-terminal peptides of plant glutamate decarboxylase to calmodulin.</title>
        <authorList>
            <person name="Yap K.L."/>
            <person name="Yuan T."/>
            <person name="Mal T.K."/>
            <person name="Vogel H.J."/>
            <person name="Ikura M."/>
        </authorList>
    </citation>
    <scope>STRUCTURE BY NMR OF 470-495 IN COMPLEX WITH CALMODULIN</scope>
    <scope>DIMERIZATION</scope>
</reference>
<accession>Q07346</accession>
<protein>
    <recommendedName>
        <fullName>Glutamate decarboxylase</fullName>
        <shortName>GAD</shortName>
        <ecNumber>4.1.1.15</ecNumber>
    </recommendedName>
</protein>
<comment type="function">
    <text>Catalyzes the production of GABA. The calmodulin-binding is calcium-dependent and it is proposed that this may, directly or indirectly, form a calcium regulated control of GABA biosynthesis.</text>
</comment>
<comment type="catalytic activity">
    <reaction>
        <text>L-glutamate + H(+) = 4-aminobutanoate + CO2</text>
        <dbReference type="Rhea" id="RHEA:17785"/>
        <dbReference type="ChEBI" id="CHEBI:15378"/>
        <dbReference type="ChEBI" id="CHEBI:16526"/>
        <dbReference type="ChEBI" id="CHEBI:29985"/>
        <dbReference type="ChEBI" id="CHEBI:59888"/>
        <dbReference type="EC" id="4.1.1.15"/>
    </reaction>
</comment>
<comment type="cofactor">
    <cofactor>
        <name>pyridoxal 5'-phosphate</name>
        <dbReference type="ChEBI" id="CHEBI:597326"/>
    </cofactor>
</comment>
<comment type="subunit">
    <text evidence="2">Homodimer.</text>
</comment>
<comment type="similarity">
    <text evidence="3">Belongs to the group II decarboxylase family.</text>
</comment>
<sequence>MVLSKTVSQSDVSIHSTFASRYVRTSLPRFKMPDNSIPKEAAYQIINDELMLDGNPRLNLASFVTTWMEPECDKLMMDSINKNYVDMDEYPVTTELQNRCVNMIAHLFNAPLEDGETAVGVGTVGSSEAIMLAGLAFKRKWQNKMKAQGKPCDKPNIVTGANVQVCWEKFARYFEVELKEVKLSEGYYVMDPEKAVEMVDENTICVAAILGSTLNGEFEDVKRLNDLLVEKNKETGWDTPIHVDAASGGFIAPFIYPELEWDFRLPLVKSINVSGHKYGLVYAGIGWVVWRNKDDLPDELIFHINYLGADQPTFTLNFSKGSSQVIAQYYQLIRLGYEGYKNVMENCQENASVLREGLEKTGRFNIISKEIGVPLVAFSLKDNRQHNEFEISETLRRFGWIVPAYTMPPNAQHITVLRVVIREDFSRTLAERLVRDIEKVLHELDTLPARVNAKLAVAEEQAAANGSEVHKKTDSEVQLEMITAWKKFVEEKKKKTNRVC</sequence>
<feature type="chain" id="PRO_0000146976" description="Glutamate decarboxylase">
    <location>
        <begin position="1"/>
        <end position="500"/>
    </location>
</feature>
<feature type="region of interest" description="Calmodulin-binding">
    <location>
        <begin position="469"/>
        <end position="500"/>
    </location>
</feature>
<feature type="modified residue" description="N6-(pyridoxal phosphate)lysine" evidence="1">
    <location>
        <position position="277"/>
    </location>
</feature>
<feature type="helix" evidence="4">
    <location>
        <begin position="474"/>
        <end position="492"/>
    </location>
</feature>